<comment type="function">
    <text evidence="1 2 3 4 5 7 8 9 10 11 12 13 14">15-O-acetyltransferase; part of the core gene cluster that mediates the biosynthesis of trichothecenes, a very large family of chemically related bicyclic sesquiterpene compounds acting as mycotoxins, including T2-toxin (PubMed:19319932, PubMed:8593041). The biosynthesis of trichothecenes begins with the cyclization of farnesyl diphosphate to trichodiene and is catalyzed by the trichodiene synthase TRI5 (PubMed:3800398). Trichodiene undergoes a series of oxygenations catalyzed by the cytochrome P450 monooxygenase TRI4 (PubMed:7651333). TRI4 controls the addition of four oxygens at C-2, C-3, C-11, and the C-12, C-13-epoxide to form the intermediate isotrichotriol (PubMed:16917519). Isotrichotriol then undergoes a non-enzymatic isomerization and cyclization to form isotrichodermol (PubMed:2317042). During this process, the oxygen at the C-2 position becomes the pyran ring oxygen and the hydroxyl group at C-11 is lost (PubMed:2317042). More complex type A trichothecenes are built by modifying isotrichodermol through a series of paired hydroxylation and acetylation or acylation steps (PubMed:11352533). Isotrichodermol is converted to isotrichodermin by the acetyltransferase TRI101 (PubMed:10583973). TRI101 encodes a C-3 transacetylase that acts as a self-protection or resistance factor during biosynthesis and that the presence of a free C-3 hydroxyl group is a key component of Fusarium trichothecene phytotoxicity (PubMed:10583973). A second hydroxyl group is added to C-15 by the trichothecene C-15 hydroxylase TRI11, producing 15-decalonectrin, which is then acetylated by TRI3, producing calonectrin (PubMed:19319932, PubMed:8593041, PubMed:9435078). A third hydroxyl group is added at C-4 by the cytochrome P450 monooxygenase TRI13, converting calonectrin to 3,15-diacetoxyspirpenol, which is subsequently acetylated by the acetyltransferase TRI7 (PubMed:11352533, PubMed:12135578). A fourth hydroxyl group is added to C-8 by the cytochrome P450 monooxygenase TRI1, followed by the addition of an isovaleryl moiety by TRI16 (PubMed:12620849, PubMed:14532047). Finally, the acetyl group is removed from the C-3 position by the trichothecene C-3 esterase TRI8 to produce T-2 toxin (PubMed:12039755).</text>
</comment>
<comment type="biophysicochemical properties">
    <kinetics>
        <KM evidence="9">3.8 uM for 15-decalonectrin</KM>
    </kinetics>
</comment>
<comment type="pathway">
    <text evidence="13">Sesquiterpene biosynthesis; trichothecene biosynthesis.</text>
</comment>
<comment type="induction">
    <text evidence="6">Expression is positively regulated by the trichothecene cluster-specific transcription activator TRI10 (PubMed:12732543).</text>
</comment>
<comment type="disruption phenotype">
    <text evidence="13">Leads to the accumulation of deacetylated calonectrins (PubMed:8593041).</text>
</comment>
<comment type="miscellaneous">
    <text evidence="16">Trichothecenes are sesquiterpenoid toxins that act by inhibiting protein biosynthesis.</text>
</comment>
<comment type="similarity">
    <text evidence="16">Belongs to the trichothecene O-acetyltransferase family.</text>
</comment>
<keyword id="KW-0002">3D-structure</keyword>
<keyword id="KW-0808">Transferase</keyword>
<accession>Q9C1B7</accession>
<evidence type="ECO:0000269" key="1">
    <source>
    </source>
</evidence>
<evidence type="ECO:0000269" key="2">
    <source>
    </source>
</evidence>
<evidence type="ECO:0000269" key="3">
    <source>
    </source>
</evidence>
<evidence type="ECO:0000269" key="4">
    <source>
    </source>
</evidence>
<evidence type="ECO:0000269" key="5">
    <source>
    </source>
</evidence>
<evidence type="ECO:0000269" key="6">
    <source>
    </source>
</evidence>
<evidence type="ECO:0000269" key="7">
    <source>
    </source>
</evidence>
<evidence type="ECO:0000269" key="8">
    <source>
    </source>
</evidence>
<evidence type="ECO:0000269" key="9">
    <source>
    </source>
</evidence>
<evidence type="ECO:0000269" key="10">
    <source>
    </source>
</evidence>
<evidence type="ECO:0000269" key="11">
    <source>
    </source>
</evidence>
<evidence type="ECO:0000269" key="12">
    <source>
    </source>
</evidence>
<evidence type="ECO:0000269" key="13">
    <source>
    </source>
</evidence>
<evidence type="ECO:0000269" key="14">
    <source>
    </source>
</evidence>
<evidence type="ECO:0000303" key="15">
    <source>
    </source>
</evidence>
<evidence type="ECO:0000305" key="16"/>
<evidence type="ECO:0007744" key="17">
    <source>
        <dbReference type="PDB" id="3FP0"/>
    </source>
</evidence>
<evidence type="ECO:0007829" key="18">
    <source>
        <dbReference type="PDB" id="3FOT"/>
    </source>
</evidence>
<evidence type="ECO:0007829" key="19">
    <source>
        <dbReference type="PDB" id="3FP0"/>
    </source>
</evidence>
<dbReference type="EC" id="2.3.2.-" evidence="9 13"/>
<dbReference type="EMBL" id="AF359360">
    <property type="protein sequence ID" value="AAK33072.1"/>
    <property type="molecule type" value="Genomic_DNA"/>
</dbReference>
<dbReference type="PDB" id="3FOT">
    <property type="method" value="X-ray"/>
    <property type="resolution" value="1.75 A"/>
    <property type="chains" value="A=1-519"/>
</dbReference>
<dbReference type="PDB" id="3FP0">
    <property type="method" value="X-ray"/>
    <property type="resolution" value="1.90 A"/>
    <property type="chains" value="A=1-519"/>
</dbReference>
<dbReference type="PDBsum" id="3FOT"/>
<dbReference type="PDBsum" id="3FP0"/>
<dbReference type="SMR" id="Q9C1B7"/>
<dbReference type="UniPathway" id="UPA00267"/>
<dbReference type="EvolutionaryTrace" id="Q9C1B7"/>
<dbReference type="GO" id="GO:0016407">
    <property type="term" value="F:acetyltransferase activity"/>
    <property type="evidence" value="ECO:0007669"/>
    <property type="project" value="InterPro"/>
</dbReference>
<dbReference type="GO" id="GO:0043386">
    <property type="term" value="P:mycotoxin biosynthetic process"/>
    <property type="evidence" value="ECO:0007669"/>
    <property type="project" value="InterPro"/>
</dbReference>
<dbReference type="Gene3D" id="3.30.559.10">
    <property type="entry name" value="Chloramphenicol acetyltransferase-like domain"/>
    <property type="match status" value="1"/>
</dbReference>
<dbReference type="Gene3D" id="3.30.559.30">
    <property type="entry name" value="Nonribosomal peptide synthetase, condensation domain"/>
    <property type="match status" value="1"/>
</dbReference>
<dbReference type="InterPro" id="IPR023213">
    <property type="entry name" value="CAT-like_dom_sf"/>
</dbReference>
<dbReference type="InterPro" id="IPR009992">
    <property type="entry name" value="Tri3/Sat12/Sat16/Mac1"/>
</dbReference>
<dbReference type="PANTHER" id="PTHR42034">
    <property type="entry name" value="CHROMOSOME 7, WHOLE GENOME SHOTGUN SEQUENCE-RELATED"/>
    <property type="match status" value="1"/>
</dbReference>
<dbReference type="PANTHER" id="PTHR42034:SF1">
    <property type="entry name" value="CONDENSATION DOMAIN-CONTAINING PROTEIN"/>
    <property type="match status" value="1"/>
</dbReference>
<dbReference type="Pfam" id="PF07428">
    <property type="entry name" value="Tri3"/>
    <property type="match status" value="1"/>
</dbReference>
<sequence length="519" mass="58105">MSASSSSALPPLVPALYRWKSTGSSGRQVQRRCVGAEAIVGLEEKNRRALYDLYIATSLRNIAPASTLLTLQNLKEMFELALLDARFEHPECACTVSWDDEVPAIITYESPESNESARDWARGCIHVQPTAKSALDLWSEMEEGRAAANDNTPSKSIELFLLSDVSTDSTPIPQDATVEILFHSNHLFWDGIGCRKFVGDLFRLVGSYIGRSDSREMKKIQWGQEIKNLSPPVVDSLKLDINTLGSEFDDKCTEYTSALVANYKSRGMKFQPGLALPRCVIHKLSADESIAIVKAVKTRLGPGFTISHLTQAAIVLALLDHLKPNDLSDDEVFISPTSVDGRRWLREDIASNFYAMCQTAAVVRIENLKSIAVSHKDEKELQVRALESACRNIKKSYRQWLENPFLQALGLRVHNFEASYLHAKPIPFEGEANPLFISDGINERFIPHEIKQTATGENVLSVESIDFVVNQSLPYLAIRLDSWRDASTLNIIYNDANYTEAEVQKYLQSIVEFMLAFRL</sequence>
<organism>
    <name type="scientific">Fusarium sporotrichioides</name>
    <dbReference type="NCBI Taxonomy" id="5514"/>
    <lineage>
        <taxon>Eukaryota</taxon>
        <taxon>Fungi</taxon>
        <taxon>Dikarya</taxon>
        <taxon>Ascomycota</taxon>
        <taxon>Pezizomycotina</taxon>
        <taxon>Sordariomycetes</taxon>
        <taxon>Hypocreomycetidae</taxon>
        <taxon>Hypocreales</taxon>
        <taxon>Nectriaceae</taxon>
        <taxon>Fusarium</taxon>
    </lineage>
</organism>
<name>TRI3_FUSSP</name>
<reference key="1">
    <citation type="journal article" date="1996" name="Appl. Environ. Microbiol.">
        <title>Isolation and characterization of Tri3, a gene encoding 15-O-acetyltransferase from Fusarium sporotrichioides.</title>
        <authorList>
            <person name="McCormick S.P."/>
            <person name="Hohn T.M."/>
            <person name="Desjardins A.E."/>
        </authorList>
    </citation>
    <scope>NUCLEOTIDE SEQUENCE [GENOMIC DNA]</scope>
    <scope>DISRUPTION PHENOTYPE</scope>
    <scope>FUNCTION</scope>
    <scope>CATALYTIC ACTIVITY</scope>
    <scope>PATHWAY</scope>
    <source>
        <strain>ATCC 24631 / NRRL 3299</strain>
    </source>
</reference>
<reference key="2">
    <citation type="journal article" date="2001" name="Fungal Genet. Biol.">
        <title>A genetic and biochemical approach to study trichothecene diversity in Fusarium sporotrichioides and Fusarium graminearum.</title>
        <authorList>
            <person name="Brown D.W."/>
            <person name="McCormick S.P."/>
            <person name="Alexander N.J."/>
            <person name="Proctor R.H."/>
            <person name="Desjardins A.E."/>
        </authorList>
    </citation>
    <scope>NUCLEOTIDE SEQUENCE [GENOMIC DNA]</scope>
    <scope>FUNCTION</scope>
    <source>
        <strain>ATCC 24631 / NRRL 3299</strain>
    </source>
</reference>
<reference key="3">
    <citation type="journal article" date="1986" name="Arch. Biochem. Biophys.">
        <title>Purification and characterization of the sesquiterpene cyclase trichodiene synthetase from Fusarium sporotrichioides.</title>
        <authorList>
            <person name="Hohn T.M."/>
            <person name="Vanmiddlesworth F."/>
        </authorList>
    </citation>
    <scope>FUNCTION</scope>
</reference>
<reference key="4">
    <citation type="journal article" date="1990" name="Appl. Environ. Microbiol.">
        <title>Bioconversion of possible T-2 toxin precursors by a mutant strain of Fusarium sporotrichioides NRRL 3299.</title>
        <authorList>
            <person name="McCormick S.P."/>
            <person name="Taylor S.L."/>
            <person name="Plattner R.D."/>
            <person name="Beremand M.N."/>
        </authorList>
    </citation>
    <scope>FUNCTION</scope>
</reference>
<reference key="5">
    <citation type="journal article" date="1995" name="Mol. Gen. Genet.">
        <title>The Tri4 gene of Fusarium sporotrichioides encodes a cytochrome P450 monooxygenase involved in trichothecene biosynthesis.</title>
        <authorList>
            <person name="Hohn T.M."/>
            <person name="Desjardins A.E."/>
            <person name="McCormick S.P."/>
        </authorList>
    </citation>
    <scope>FUNCTION</scope>
</reference>
<reference key="6">
    <citation type="journal article" date="1998" name="Appl. Environ. Microbiol.">
        <title>The TRI11 gene of Fusarium sporotrichioides encodes a cytochrome P-450 monooxygenase required for C-15 hydroxylation in trichothecene biosynthesis.</title>
        <authorList>
            <person name="Alexander N.J."/>
            <person name="Hohn T.M."/>
            <person name="McCormick S.P."/>
        </authorList>
    </citation>
    <scope>FUNCTION</scope>
</reference>
<reference key="7">
    <citation type="journal article" date="1999" name="Appl. Environ. Microbiol.">
        <title>Disruption of TRI101, the gene encoding trichothecene 3-O-acetyltransferase, from Fusarium sporotrichioides.</title>
        <authorList>
            <person name="McCormick S.P."/>
            <person name="Alexander N.J."/>
            <person name="Trapp S.E."/>
            <person name="Hohn T.M."/>
        </authorList>
    </citation>
    <scope>FUNCTION</scope>
</reference>
<reference key="8">
    <citation type="journal article" date="2002" name="Appl. Environ. Microbiol.">
        <title>Fusarium Tri8 encodes a trichothecene C-3 esterase.</title>
        <authorList>
            <person name="McCormick S.P."/>
            <person name="Alexander N.J."/>
        </authorList>
    </citation>
    <scope>FUNCTION</scope>
</reference>
<reference key="9">
    <citation type="journal article" date="2002" name="Fungal Genet. Biol.">
        <title>Inactivation of a cytochrome P-450 is a determinant of trichothecene diversity in Fusarium species.</title>
        <authorList>
            <person name="Brown D.W."/>
            <person name="McCormick S.P."/>
            <person name="Alexander N.J."/>
            <person name="Proctor R.H."/>
            <person name="Desjardins A.E."/>
        </authorList>
    </citation>
    <scope>FUNCTION</scope>
</reference>
<reference key="10">
    <citation type="journal article" date="2003" name="Appl. Environ. Microbiol.">
        <title>Tri1 encodes the cytochrome P450 monooxygenase for C-8 hydroxylation during trichothecene biosynthesis in Fusarium sporotrichioides and resides upstream of another new Tri gene.</title>
        <authorList>
            <person name="Meek I.B."/>
            <person name="Peplow A.W."/>
            <person name="Ake C. Jr."/>
            <person name="Phillips T.D."/>
            <person name="Beremand M.N."/>
        </authorList>
    </citation>
    <scope>FUNCTION</scope>
</reference>
<reference key="11">
    <citation type="journal article" date="2003" name="Appl. Environ. Microbiol.">
        <title>Identification of new genes positively regulated by Tri10 and a regulatory network for trichothecene mycotoxin production.</title>
        <authorList>
            <person name="Peplow A.W."/>
            <person name="Tag A.G."/>
            <person name="Garifullina G.F."/>
            <person name="Beremand M.N."/>
        </authorList>
    </citation>
    <scope>INDUCTION</scope>
</reference>
<reference key="12">
    <citation type="journal article" date="2003" name="Appl. Environ. Microbiol.">
        <title>Tri16 is required for esterification of position C-8 during trichothecene mycotoxin production by Fusarium sporotrichioides.</title>
        <authorList>
            <person name="Peplow A.W."/>
            <person name="Meek I.B."/>
            <person name="Wiles M.C."/>
            <person name="Phillips T.D."/>
            <person name="Beremand M.N."/>
        </authorList>
    </citation>
    <scope>FUNCTION</scope>
</reference>
<reference key="13">
    <citation type="journal article" date="2006" name="Can. J. Microbiol.">
        <title>Fusarium Tri4 encodes a multifunctional oxygenase required for trichothecene biosynthesis.</title>
        <authorList>
            <person name="McCormick S.P."/>
            <person name="Alexander N.J."/>
            <person name="Proctor R.H."/>
        </authorList>
    </citation>
    <scope>FUNCTION</scope>
</reference>
<reference key="14">
    <citation type="journal article" date="2009" name="Protein Sci.">
        <title>Structural and functional characterization of TRI3 trichothecene 15-O-acetyltransferase from Fusarium sporotrichioides.</title>
        <authorList>
            <person name="Garvey G.S."/>
            <person name="McCormick S.P."/>
            <person name="Alexander N.J."/>
            <person name="Rayment I."/>
        </authorList>
    </citation>
    <scope>X-RAY CRYSTALLOGRAPHY (1.75 ANGSTROMS) IN COMPLEX WITH 15-DECALONECTRIN</scope>
    <scope>FUNCTION</scope>
    <scope>CATALYTIC ACTIVITY</scope>
    <scope>BIOPHYSICOCHEMICAL PROPERTIES</scope>
</reference>
<feature type="chain" id="PRO_0000442371" description="Trichothecene 15-O-acetyltransferase TRI3">
    <location>
        <begin position="1"/>
        <end position="519"/>
    </location>
</feature>
<feature type="binding site" evidence="9 17">
    <location>
        <position position="414"/>
    </location>
    <ligand>
        <name>15-deacetylcalonectrin</name>
        <dbReference type="ChEBI" id="CHEBI:157609"/>
    </ligand>
</feature>
<feature type="helix" evidence="18">
    <location>
        <begin position="14"/>
        <end position="17"/>
    </location>
</feature>
<feature type="strand" evidence="18">
    <location>
        <begin position="28"/>
        <end position="32"/>
    </location>
</feature>
<feature type="helix" evidence="18">
    <location>
        <begin position="36"/>
        <end position="41"/>
    </location>
</feature>
<feature type="helix" evidence="18">
    <location>
        <begin position="43"/>
        <end position="46"/>
    </location>
</feature>
<feature type="turn" evidence="18">
    <location>
        <begin position="47"/>
        <end position="51"/>
    </location>
</feature>
<feature type="strand" evidence="18">
    <location>
        <begin position="53"/>
        <end position="61"/>
    </location>
</feature>
<feature type="helix" evidence="18">
    <location>
        <begin position="71"/>
        <end position="88"/>
    </location>
</feature>
<feature type="helix" evidence="18">
    <location>
        <begin position="90"/>
        <end position="93"/>
    </location>
</feature>
<feature type="strand" evidence="18">
    <location>
        <begin position="95"/>
        <end position="97"/>
    </location>
</feature>
<feature type="strand" evidence="18">
    <location>
        <begin position="100"/>
        <end position="103"/>
    </location>
</feature>
<feature type="strand" evidence="18">
    <location>
        <begin position="105"/>
        <end position="109"/>
    </location>
</feature>
<feature type="helix" evidence="18">
    <location>
        <begin position="114"/>
        <end position="124"/>
    </location>
</feature>
<feature type="strand" evidence="18">
    <location>
        <begin position="125"/>
        <end position="129"/>
    </location>
</feature>
<feature type="helix" evidence="18">
    <location>
        <begin position="134"/>
        <end position="147"/>
    </location>
</feature>
<feature type="strand" evidence="18">
    <location>
        <begin position="158"/>
        <end position="167"/>
    </location>
</feature>
<feature type="strand" evidence="18">
    <location>
        <begin position="177"/>
        <end position="184"/>
    </location>
</feature>
<feature type="helix" evidence="18">
    <location>
        <begin position="186"/>
        <end position="188"/>
    </location>
</feature>
<feature type="helix" evidence="18">
    <location>
        <begin position="191"/>
        <end position="205"/>
    </location>
</feature>
<feature type="helix" evidence="18">
    <location>
        <begin position="214"/>
        <end position="216"/>
    </location>
</feature>
<feature type="turn" evidence="18">
    <location>
        <begin position="222"/>
        <end position="225"/>
    </location>
</feature>
<feature type="helix" evidence="18">
    <location>
        <begin position="226"/>
        <end position="228"/>
    </location>
</feature>
<feature type="helix" evidence="18">
    <location>
        <begin position="234"/>
        <end position="236"/>
    </location>
</feature>
<feature type="strand" evidence="18">
    <location>
        <begin position="237"/>
        <end position="239"/>
    </location>
</feature>
<feature type="helix" evidence="18">
    <location>
        <begin position="241"/>
        <end position="243"/>
    </location>
</feature>
<feature type="helix" evidence="18">
    <location>
        <begin position="246"/>
        <end position="264"/>
    </location>
</feature>
<feature type="strand" evidence="18">
    <location>
        <begin position="277"/>
        <end position="283"/>
    </location>
</feature>
<feature type="helix" evidence="18">
    <location>
        <begin position="286"/>
        <end position="299"/>
    </location>
</feature>
<feature type="helix" evidence="18">
    <location>
        <begin position="306"/>
        <end position="321"/>
    </location>
</feature>
<feature type="strand" evidence="18">
    <location>
        <begin position="333"/>
        <end position="340"/>
    </location>
</feature>
<feature type="helix" evidence="18">
    <location>
        <begin position="342"/>
        <end position="344"/>
    </location>
</feature>
<feature type="helix" evidence="18">
    <location>
        <begin position="347"/>
        <end position="350"/>
    </location>
</feature>
<feature type="strand" evidence="18">
    <location>
        <begin position="358"/>
        <end position="365"/>
    </location>
</feature>
<feature type="helix" evidence="18">
    <location>
        <begin position="368"/>
        <end position="371"/>
    </location>
</feature>
<feature type="helix" evidence="18">
    <location>
        <begin position="379"/>
        <end position="401"/>
    </location>
</feature>
<feature type="helix" evidence="18">
    <location>
        <begin position="406"/>
        <end position="423"/>
    </location>
</feature>
<feature type="strand" evidence="19">
    <location>
        <begin position="424"/>
        <end position="426"/>
    </location>
</feature>
<feature type="strand" evidence="19">
    <location>
        <begin position="430"/>
        <end position="432"/>
    </location>
</feature>
<feature type="strand" evidence="18">
    <location>
        <begin position="435"/>
        <end position="441"/>
    </location>
</feature>
<feature type="helix" evidence="18">
    <location>
        <begin position="442"/>
        <end position="444"/>
    </location>
</feature>
<feature type="strand" evidence="18">
    <location>
        <begin position="448"/>
        <end position="451"/>
    </location>
</feature>
<feature type="turn" evidence="18">
    <location>
        <begin position="453"/>
        <end position="455"/>
    </location>
</feature>
<feature type="strand" evidence="18">
    <location>
        <begin position="458"/>
        <end position="469"/>
    </location>
</feature>
<feature type="strand" evidence="18">
    <location>
        <begin position="473"/>
        <end position="475"/>
    </location>
</feature>
<feature type="strand" evidence="18">
    <location>
        <begin position="477"/>
        <end position="483"/>
    </location>
</feature>
<feature type="strand" evidence="18">
    <location>
        <begin position="486"/>
        <end position="494"/>
    </location>
</feature>
<feature type="turn" evidence="18">
    <location>
        <begin position="495"/>
        <end position="497"/>
    </location>
</feature>
<feature type="helix" evidence="18">
    <location>
        <begin position="500"/>
        <end position="516"/>
    </location>
</feature>
<proteinExistence type="evidence at protein level"/>
<gene>
    <name evidence="15" type="primary">TRI3</name>
</gene>
<protein>
    <recommendedName>
        <fullName evidence="15">Trichothecene 15-O-acetyltransferase TRI3</fullName>
        <ecNumber evidence="9 13">2.3.2.-</ecNumber>
    </recommendedName>
    <alternativeName>
        <fullName evidence="15">Core trichothecene cluster (CTC) protein 3</fullName>
    </alternativeName>
</protein>